<evidence type="ECO:0000255" key="1"/>
<evidence type="ECO:0000256" key="2">
    <source>
        <dbReference type="SAM" id="MobiDB-lite"/>
    </source>
</evidence>
<evidence type="ECO:0000305" key="3"/>
<gene>
    <name type="ORF">DDB_G0274369</name>
</gene>
<feature type="chain" id="PRO_0000348149" description="Putative uncharacterized protein DDB_G0274369">
    <location>
        <begin position="1"/>
        <end position="352"/>
    </location>
</feature>
<feature type="transmembrane region" description="Helical" evidence="1">
    <location>
        <begin position="131"/>
        <end position="151"/>
    </location>
</feature>
<feature type="region of interest" description="Disordered" evidence="2">
    <location>
        <begin position="41"/>
        <end position="73"/>
    </location>
</feature>
<feature type="region of interest" description="Disordered" evidence="2">
    <location>
        <begin position="193"/>
        <end position="219"/>
    </location>
</feature>
<feature type="compositionally biased region" description="Low complexity" evidence="2">
    <location>
        <begin position="50"/>
        <end position="72"/>
    </location>
</feature>
<feature type="compositionally biased region" description="Low complexity" evidence="2">
    <location>
        <begin position="193"/>
        <end position="213"/>
    </location>
</feature>
<feature type="glycosylation site" description="N-linked (GlcNAc...) asparagine" evidence="1">
    <location>
        <position position="14"/>
    </location>
</feature>
<feature type="glycosylation site" description="N-linked (GlcNAc...) asparagine" evidence="1">
    <location>
        <position position="52"/>
    </location>
</feature>
<feature type="glycosylation site" description="N-linked (GlcNAc...) asparagine" evidence="1">
    <location>
        <position position="70"/>
    </location>
</feature>
<feature type="glycosylation site" description="N-linked (GlcNAc...) asparagine" evidence="1">
    <location>
        <position position="165"/>
    </location>
</feature>
<feature type="glycosylation site" description="N-linked (GlcNAc...) asparagine" evidence="1">
    <location>
        <position position="186"/>
    </location>
</feature>
<feature type="glycosylation site" description="N-linked (GlcNAc...) asparagine" evidence="1">
    <location>
        <position position="192"/>
    </location>
</feature>
<feature type="glycosylation site" description="N-linked (GlcNAc...) asparagine" evidence="1">
    <location>
        <position position="193"/>
    </location>
</feature>
<feature type="glycosylation site" description="N-linked (GlcNAc...) asparagine" evidence="1">
    <location>
        <position position="203"/>
    </location>
</feature>
<feature type="glycosylation site" description="N-linked (GlcNAc...) asparagine" evidence="1">
    <location>
        <position position="289"/>
    </location>
</feature>
<keyword id="KW-0325">Glycoprotein</keyword>
<keyword id="KW-0472">Membrane</keyword>
<keyword id="KW-1185">Reference proteome</keyword>
<keyword id="KW-0812">Transmembrane</keyword>
<keyword id="KW-1133">Transmembrane helix</keyword>
<reference key="1">
    <citation type="journal article" date="2002" name="Nature">
        <title>Sequence and analysis of chromosome 2 of Dictyostelium discoideum.</title>
        <authorList>
            <person name="Gloeckner G."/>
            <person name="Eichinger L."/>
            <person name="Szafranski K."/>
            <person name="Pachebat J.A."/>
            <person name="Bankier A.T."/>
            <person name="Dear P.H."/>
            <person name="Lehmann R."/>
            <person name="Baumgart C."/>
            <person name="Parra G."/>
            <person name="Abril J.F."/>
            <person name="Guigo R."/>
            <person name="Kumpf K."/>
            <person name="Tunggal B."/>
            <person name="Cox E.C."/>
            <person name="Quail M.A."/>
            <person name="Platzer M."/>
            <person name="Rosenthal A."/>
            <person name="Noegel A.A."/>
        </authorList>
    </citation>
    <scope>NUCLEOTIDE SEQUENCE [LARGE SCALE GENOMIC DNA]</scope>
    <source>
        <strain>AX4</strain>
    </source>
</reference>
<reference key="2">
    <citation type="journal article" date="2005" name="Nature">
        <title>The genome of the social amoeba Dictyostelium discoideum.</title>
        <authorList>
            <person name="Eichinger L."/>
            <person name="Pachebat J.A."/>
            <person name="Gloeckner G."/>
            <person name="Rajandream M.A."/>
            <person name="Sucgang R."/>
            <person name="Berriman M."/>
            <person name="Song J."/>
            <person name="Olsen R."/>
            <person name="Szafranski K."/>
            <person name="Xu Q."/>
            <person name="Tunggal B."/>
            <person name="Kummerfeld S."/>
            <person name="Madera M."/>
            <person name="Konfortov B.A."/>
            <person name="Rivero F."/>
            <person name="Bankier A.T."/>
            <person name="Lehmann R."/>
            <person name="Hamlin N."/>
            <person name="Davies R."/>
            <person name="Gaudet P."/>
            <person name="Fey P."/>
            <person name="Pilcher K."/>
            <person name="Chen G."/>
            <person name="Saunders D."/>
            <person name="Sodergren E.J."/>
            <person name="Davis P."/>
            <person name="Kerhornou A."/>
            <person name="Nie X."/>
            <person name="Hall N."/>
            <person name="Anjard C."/>
            <person name="Hemphill L."/>
            <person name="Bason N."/>
            <person name="Farbrother P."/>
            <person name="Desany B."/>
            <person name="Just E."/>
            <person name="Morio T."/>
            <person name="Rost R."/>
            <person name="Churcher C.M."/>
            <person name="Cooper J."/>
            <person name="Haydock S."/>
            <person name="van Driessche N."/>
            <person name="Cronin A."/>
            <person name="Goodhead I."/>
            <person name="Muzny D.M."/>
            <person name="Mourier T."/>
            <person name="Pain A."/>
            <person name="Lu M."/>
            <person name="Harper D."/>
            <person name="Lindsay R."/>
            <person name="Hauser H."/>
            <person name="James K.D."/>
            <person name="Quiles M."/>
            <person name="Madan Babu M."/>
            <person name="Saito T."/>
            <person name="Buchrieser C."/>
            <person name="Wardroper A."/>
            <person name="Felder M."/>
            <person name="Thangavelu M."/>
            <person name="Johnson D."/>
            <person name="Knights A."/>
            <person name="Loulseged H."/>
            <person name="Mungall K.L."/>
            <person name="Oliver K."/>
            <person name="Price C."/>
            <person name="Quail M.A."/>
            <person name="Urushihara H."/>
            <person name="Hernandez J."/>
            <person name="Rabbinowitsch E."/>
            <person name="Steffen D."/>
            <person name="Sanders M."/>
            <person name="Ma J."/>
            <person name="Kohara Y."/>
            <person name="Sharp S."/>
            <person name="Simmonds M.N."/>
            <person name="Spiegler S."/>
            <person name="Tivey A."/>
            <person name="Sugano S."/>
            <person name="White B."/>
            <person name="Walker D."/>
            <person name="Woodward J.R."/>
            <person name="Winckler T."/>
            <person name="Tanaka Y."/>
            <person name="Shaulsky G."/>
            <person name="Schleicher M."/>
            <person name="Weinstock G.M."/>
            <person name="Rosenthal A."/>
            <person name="Cox E.C."/>
            <person name="Chisholm R.L."/>
            <person name="Gibbs R.A."/>
            <person name="Loomis W.F."/>
            <person name="Platzer M."/>
            <person name="Kay R.R."/>
            <person name="Williams J.G."/>
            <person name="Dear P.H."/>
            <person name="Noegel A.A."/>
            <person name="Barrell B.G."/>
            <person name="Kuspa A."/>
        </authorList>
    </citation>
    <scope>NUCLEOTIDE SEQUENCE [LARGE SCALE GENOMIC DNA]</scope>
    <source>
        <strain>AX4</strain>
    </source>
</reference>
<dbReference type="EMBL" id="AAFI02000012">
    <property type="protein sequence ID" value="EAL70077.1"/>
    <property type="molecule type" value="Genomic_DNA"/>
</dbReference>
<dbReference type="RefSeq" id="XP_643880.1">
    <property type="nucleotide sequence ID" value="XM_638788.1"/>
</dbReference>
<dbReference type="FunCoup" id="Q86IV0">
    <property type="interactions" value="141"/>
</dbReference>
<dbReference type="GlyGen" id="Q86IV0">
    <property type="glycosylation" value="9 sites"/>
</dbReference>
<dbReference type="PaxDb" id="44689-DDB0167931"/>
<dbReference type="EnsemblProtists" id="EAL70077">
    <property type="protein sequence ID" value="EAL70077"/>
    <property type="gene ID" value="DDB_G0274369"/>
</dbReference>
<dbReference type="GeneID" id="8619306"/>
<dbReference type="KEGG" id="ddi:DDB_G0274369"/>
<dbReference type="dictyBase" id="DDB_G0274369"/>
<dbReference type="VEuPathDB" id="AmoebaDB:DDB_G0274369"/>
<dbReference type="eggNOG" id="ENOG502RHBT">
    <property type="taxonomic scope" value="Eukaryota"/>
</dbReference>
<dbReference type="HOGENOM" id="CLU_788518_0_0_1"/>
<dbReference type="InParanoid" id="Q86IV0"/>
<dbReference type="PRO" id="PR:Q86IV0"/>
<dbReference type="Proteomes" id="UP000002195">
    <property type="component" value="Chromosome 2"/>
</dbReference>
<dbReference type="GO" id="GO:0016020">
    <property type="term" value="C:membrane"/>
    <property type="evidence" value="ECO:0007669"/>
    <property type="project" value="UniProtKB-SubCell"/>
</dbReference>
<comment type="subcellular location">
    <subcellularLocation>
        <location evidence="3">Membrane</location>
        <topology evidence="3">Single-pass membrane protein</topology>
    </subcellularLocation>
</comment>
<proteinExistence type="predicted"/>
<protein>
    <recommendedName>
        <fullName>Putative uncharacterized protein DDB_G0274369</fullName>
    </recommendedName>
</protein>
<name>Y7931_DICDI</name>
<sequence length="352" mass="39366">MGLKIVDGSIVHDNLTSSSPPSVTNSSPLLNTKRRNSITSLSDYKKNKDTLNNSNNNINQPFENSNNFNNNSKEIKNENKIKNFFQHLFSILLLKNPTMIQIIETLELSTNIYNIQFKLKYLLAICVSSQIIFKSSGLLITLLVLYLGTFFNKISINNKDKNKNNNTIDYSLKNNNIDTSLIKDINNSVISNNSSNSNNNNINNSNNNNNNNNRILSPNQLSKSSNVEYNKCKCKSPTTSSNNYLSSSQSRVQTLSSPNISPCNICVSPNLLYNSLSSLSSSLPINSCNYSMSEQEGDEFESNFDFEDSQYEESDEEDNSSPAFHLYSSPNLRVACNKISTFSPNGRKLGTN</sequence>
<accession>Q86IV0</accession>
<accession>Q556D0</accession>
<organism>
    <name type="scientific">Dictyostelium discoideum</name>
    <name type="common">Social amoeba</name>
    <dbReference type="NCBI Taxonomy" id="44689"/>
    <lineage>
        <taxon>Eukaryota</taxon>
        <taxon>Amoebozoa</taxon>
        <taxon>Evosea</taxon>
        <taxon>Eumycetozoa</taxon>
        <taxon>Dictyostelia</taxon>
        <taxon>Dictyosteliales</taxon>
        <taxon>Dictyosteliaceae</taxon>
        <taxon>Dictyostelium</taxon>
    </lineage>
</organism>